<reference key="1">
    <citation type="journal article" date="1988" name="J. Bacteriol.">
        <title>Cloning and characterization of Bacillus subtilis homologs of Escherichia coli cell division genes ftsZ and ftsA.</title>
        <authorList>
            <person name="Beall B."/>
            <person name="Lowe M."/>
            <person name="Lutkenhaus J."/>
        </authorList>
    </citation>
    <scope>NUCLEOTIDE SEQUENCE [GENOMIC DNA]</scope>
</reference>
<reference key="2">
    <citation type="journal article" date="1997" name="Nature">
        <title>The complete genome sequence of the Gram-positive bacterium Bacillus subtilis.</title>
        <authorList>
            <person name="Kunst F."/>
            <person name="Ogasawara N."/>
            <person name="Moszer I."/>
            <person name="Albertini A.M."/>
            <person name="Alloni G."/>
            <person name="Azevedo V."/>
            <person name="Bertero M.G."/>
            <person name="Bessieres P."/>
            <person name="Bolotin A."/>
            <person name="Borchert S."/>
            <person name="Borriss R."/>
            <person name="Boursier L."/>
            <person name="Brans A."/>
            <person name="Braun M."/>
            <person name="Brignell S.C."/>
            <person name="Bron S."/>
            <person name="Brouillet S."/>
            <person name="Bruschi C.V."/>
            <person name="Caldwell B."/>
            <person name="Capuano V."/>
            <person name="Carter N.M."/>
            <person name="Choi S.-K."/>
            <person name="Codani J.-J."/>
            <person name="Connerton I.F."/>
            <person name="Cummings N.J."/>
            <person name="Daniel R.A."/>
            <person name="Denizot F."/>
            <person name="Devine K.M."/>
            <person name="Duesterhoeft A."/>
            <person name="Ehrlich S.D."/>
            <person name="Emmerson P.T."/>
            <person name="Entian K.-D."/>
            <person name="Errington J."/>
            <person name="Fabret C."/>
            <person name="Ferrari E."/>
            <person name="Foulger D."/>
            <person name="Fritz C."/>
            <person name="Fujita M."/>
            <person name="Fujita Y."/>
            <person name="Fuma S."/>
            <person name="Galizzi A."/>
            <person name="Galleron N."/>
            <person name="Ghim S.-Y."/>
            <person name="Glaser P."/>
            <person name="Goffeau A."/>
            <person name="Golightly E.J."/>
            <person name="Grandi G."/>
            <person name="Guiseppi G."/>
            <person name="Guy B.J."/>
            <person name="Haga K."/>
            <person name="Haiech J."/>
            <person name="Harwood C.R."/>
            <person name="Henaut A."/>
            <person name="Hilbert H."/>
            <person name="Holsappel S."/>
            <person name="Hosono S."/>
            <person name="Hullo M.-F."/>
            <person name="Itaya M."/>
            <person name="Jones L.-M."/>
            <person name="Joris B."/>
            <person name="Karamata D."/>
            <person name="Kasahara Y."/>
            <person name="Klaerr-Blanchard M."/>
            <person name="Klein C."/>
            <person name="Kobayashi Y."/>
            <person name="Koetter P."/>
            <person name="Koningstein G."/>
            <person name="Krogh S."/>
            <person name="Kumano M."/>
            <person name="Kurita K."/>
            <person name="Lapidus A."/>
            <person name="Lardinois S."/>
            <person name="Lauber J."/>
            <person name="Lazarevic V."/>
            <person name="Lee S.-M."/>
            <person name="Levine A."/>
            <person name="Liu H."/>
            <person name="Masuda S."/>
            <person name="Mauel C."/>
            <person name="Medigue C."/>
            <person name="Medina N."/>
            <person name="Mellado R.P."/>
            <person name="Mizuno M."/>
            <person name="Moestl D."/>
            <person name="Nakai S."/>
            <person name="Noback M."/>
            <person name="Noone D."/>
            <person name="O'Reilly M."/>
            <person name="Ogawa K."/>
            <person name="Ogiwara A."/>
            <person name="Oudega B."/>
            <person name="Park S.-H."/>
            <person name="Parro V."/>
            <person name="Pohl T.M."/>
            <person name="Portetelle D."/>
            <person name="Porwollik S."/>
            <person name="Prescott A.M."/>
            <person name="Presecan E."/>
            <person name="Pujic P."/>
            <person name="Purnelle B."/>
            <person name="Rapoport G."/>
            <person name="Rey M."/>
            <person name="Reynolds S."/>
            <person name="Rieger M."/>
            <person name="Rivolta C."/>
            <person name="Rocha E."/>
            <person name="Roche B."/>
            <person name="Rose M."/>
            <person name="Sadaie Y."/>
            <person name="Sato T."/>
            <person name="Scanlan E."/>
            <person name="Schleich S."/>
            <person name="Schroeter R."/>
            <person name="Scoffone F."/>
            <person name="Sekiguchi J."/>
            <person name="Sekowska A."/>
            <person name="Seror S.J."/>
            <person name="Serror P."/>
            <person name="Shin B.-S."/>
            <person name="Soldo B."/>
            <person name="Sorokin A."/>
            <person name="Tacconi E."/>
            <person name="Takagi T."/>
            <person name="Takahashi H."/>
            <person name="Takemaru K."/>
            <person name="Takeuchi M."/>
            <person name="Tamakoshi A."/>
            <person name="Tanaka T."/>
            <person name="Terpstra P."/>
            <person name="Tognoni A."/>
            <person name="Tosato V."/>
            <person name="Uchiyama S."/>
            <person name="Vandenbol M."/>
            <person name="Vannier F."/>
            <person name="Vassarotti A."/>
            <person name="Viari A."/>
            <person name="Wambutt R."/>
            <person name="Wedler E."/>
            <person name="Wedler H."/>
            <person name="Weitzenegger T."/>
            <person name="Winters P."/>
            <person name="Wipat A."/>
            <person name="Yamamoto H."/>
            <person name="Yamane K."/>
            <person name="Yasumoto K."/>
            <person name="Yata K."/>
            <person name="Yoshida K."/>
            <person name="Yoshikawa H.-F."/>
            <person name="Zumstein E."/>
            <person name="Yoshikawa H."/>
            <person name="Danchin A."/>
        </authorList>
    </citation>
    <scope>NUCLEOTIDE SEQUENCE [LARGE SCALE GENOMIC DNA]</scope>
    <source>
        <strain>168</strain>
    </source>
</reference>
<reference key="3">
    <citation type="journal article" date="2009" name="Microbiology">
        <title>From a consortium sequence to a unified sequence: the Bacillus subtilis 168 reference genome a decade later.</title>
        <authorList>
            <person name="Barbe V."/>
            <person name="Cruveiller S."/>
            <person name="Kunst F."/>
            <person name="Lenoble P."/>
            <person name="Meurice G."/>
            <person name="Sekowska A."/>
            <person name="Vallenet D."/>
            <person name="Wang T."/>
            <person name="Moszer I."/>
            <person name="Medigue C."/>
            <person name="Danchin A."/>
        </authorList>
    </citation>
    <scope>SEQUENCE REVISION TO 345-346</scope>
</reference>
<reference key="4">
    <citation type="journal article" date="1990" name="J. Biol. Chem.">
        <title>Cloning, genetic organization, and characterization of a structural gene encoding bacillopeptidase F from Bacillus subtilis.</title>
        <authorList>
            <person name="Wu X.-C."/>
            <person name="Nathoo S."/>
            <person name="Pang A.S.-H."/>
            <person name="Carne T."/>
            <person name="Wang S.-L."/>
        </authorList>
    </citation>
    <scope>NUCLEOTIDE SEQUENCE [GENOMIC DNA] OF 371-382</scope>
</reference>
<reference key="5">
    <citation type="journal article" date="2004" name="J. Bacteriol.">
        <title>Assembly dynamics of FtsZ rings in Bacillus subtilis and Escherichia coli and effects of FtsZ-regulating proteins.</title>
        <authorList>
            <person name="Anderson D.E."/>
            <person name="Gueiros-Filho F.J."/>
            <person name="Erickson H.P."/>
        </authorList>
    </citation>
    <scope>FUNCTION</scope>
    <source>
        <strain>JDB401</strain>
    </source>
</reference>
<reference key="6">
    <citation type="journal article" date="2005" name="J. Bacteriol.">
        <title>Cell division in Bacillus subtilis: FtsZ and FtsA association is Z-ring independent, and FtsA is required for efficient midcell Z-Ring assembly.</title>
        <authorList>
            <person name="Jensen S.O."/>
            <person name="Thompson L.S."/>
            <person name="Harry E.J."/>
        </authorList>
    </citation>
    <scope>FUNCTION</scope>
    <scope>INTERACTION WITH FTSA</scope>
    <source>
        <strain>168</strain>
    </source>
</reference>
<reference key="7">
    <citation type="journal article" date="2008" name="Mol. Microbiol.">
        <title>Peptide inhibitor of cytokinesis during sporulation in Bacillus subtilis.</title>
        <authorList>
            <person name="Handler A.A."/>
            <person name="Lim J.E."/>
            <person name="Losick R."/>
        </authorList>
    </citation>
    <scope>ACTIVITY REGULATION</scope>
    <scope>INTERACTION WITH MCIZ</scope>
    <source>
        <strain>168 / PY79</strain>
    </source>
</reference>
<reference key="8">
    <citation type="journal article" date="2013" name="Proc. Natl. Acad. Sci. U.S.A.">
        <title>Phage 29 phi protein p1 promotes replication by associating with the FtsZ ring of the divisome in Bacillus subtilis.</title>
        <authorList>
            <person name="Ballesteros-Plaza D."/>
            <person name="Holguera I."/>
            <person name="Scheffers D.J."/>
            <person name="Salas M."/>
            <person name="Munoz-Espin D."/>
        </authorList>
    </citation>
    <scope>INTERACTION WITH PHI29 DNA REPLICATION PROTEIN 1</scope>
</reference>
<reference key="9">
    <citation type="journal article" date="2007" name="J. Mol. Biol.">
        <title>Structural insights into the conformational variability of FtsZ.</title>
        <authorList>
            <person name="Oliva M.A."/>
            <person name="Trambaiolo D."/>
            <person name="Lowe J."/>
        </authorList>
    </citation>
    <scope>X-RAY CRYSTALLOGRAPHY (2.5 ANGSTROMS)</scope>
</reference>
<reference key="10">
    <citation type="journal article" date="2008" name="Science">
        <title>An inhibitor of FtsZ with potent and selective anti-staphylococcal activity.</title>
        <authorList>
            <person name="Haydon D.J."/>
            <person name="Stokes N.R."/>
            <person name="Ure R."/>
            <person name="Galbraith G."/>
            <person name="Bennett J.M."/>
            <person name="Brown D.R."/>
            <person name="Baker P.J."/>
            <person name="Barynin V.V."/>
            <person name="Rice D.W."/>
            <person name="Sedelnikova S.E."/>
            <person name="Heal J.R."/>
            <person name="Sheridan J.M."/>
            <person name="Aiwale S.T."/>
            <person name="Chauhan P.K."/>
            <person name="Srivastava A."/>
            <person name="Taneja A."/>
            <person name="Collins I."/>
            <person name="Errington J."/>
            <person name="Czaplewski L.G."/>
        </authorList>
    </citation>
    <scope>X-RAY CRYSTALLOGRAPHY (1.7 ANGSTROMS)</scope>
</reference>
<reference key="11">
    <citation type="journal article" date="2009" name="BMC Biotechnol.">
        <title>Combined protein construct and synthetic gene engineering for heterologous protein expression and crystallization using Gene Composer.</title>
        <authorList>
            <person name="Raymond A."/>
            <person name="Lovell S."/>
            <person name="Lorimer D."/>
            <person name="Walchli J."/>
            <person name="Mixon M."/>
            <person name="Wallace E."/>
            <person name="Thompkins K."/>
            <person name="Archer K."/>
            <person name="Burgin A."/>
            <person name="Stewart L."/>
        </authorList>
    </citation>
    <scope>X-RAY CRYSTALLOGRAPHY (2.0 ANGSTROMS) OF 12-315 IN COMPLEX WITH GDP</scope>
</reference>
<reference evidence="10" key="12">
    <citation type="journal article" date="2015" name="Proc. Natl. Acad. Sci. U.S.A.">
        <title>FtsZ filament capping by MciZ, a developmental regulator of bacterial division.</title>
        <authorList>
            <person name="Bisson-Filho A.W."/>
            <person name="Discola K.F."/>
            <person name="Castellen P."/>
            <person name="Blasios V."/>
            <person name="Martins A."/>
            <person name="Sforca M.L."/>
            <person name="Garcia W."/>
            <person name="Zeri A.C."/>
            <person name="Erickson H.P."/>
            <person name="Dessen A."/>
            <person name="Gueiros-Filho F.J."/>
        </authorList>
    </citation>
    <scope>X-RAY CRYSTALLOGRAPHY (3.19 ANGSTROMS) OF 11-315 IN COMPLEX WITH MCIZ</scope>
    <scope>ACTIVITY REGULATION</scope>
    <scope>MUTAGENESIS OF ASP-280</scope>
    <source>
        <strain>168 / PY79</strain>
    </source>
</reference>
<name>FTSZ_BACSU</name>
<evidence type="ECO:0000255" key="1">
    <source>
        <dbReference type="HAMAP-Rule" id="MF_00909"/>
    </source>
</evidence>
<evidence type="ECO:0000256" key="2">
    <source>
        <dbReference type="SAM" id="MobiDB-lite"/>
    </source>
</evidence>
<evidence type="ECO:0000269" key="3">
    <source>
    </source>
</evidence>
<evidence type="ECO:0000269" key="4">
    <source>
    </source>
</evidence>
<evidence type="ECO:0000269" key="5">
    <source>
    </source>
</evidence>
<evidence type="ECO:0000269" key="6">
    <source>
    </source>
</evidence>
<evidence type="ECO:0000269" key="7">
    <source>
    </source>
</evidence>
<evidence type="ECO:0000269" key="8">
    <source>
    </source>
</evidence>
<evidence type="ECO:0000305" key="9"/>
<evidence type="ECO:0007744" key="10">
    <source>
        <dbReference type="PDB" id="4U39"/>
    </source>
</evidence>
<evidence type="ECO:0007829" key="11">
    <source>
        <dbReference type="PDB" id="2RHH"/>
    </source>
</evidence>
<evidence type="ECO:0007829" key="12">
    <source>
        <dbReference type="PDB" id="2VXY"/>
    </source>
</evidence>
<keyword id="KW-0002">3D-structure</keyword>
<keyword id="KW-0131">Cell cycle</keyword>
<keyword id="KW-0132">Cell division</keyword>
<keyword id="KW-0963">Cytoplasm</keyword>
<keyword id="KW-0342">GTP-binding</keyword>
<keyword id="KW-0547">Nucleotide-binding</keyword>
<keyword id="KW-1185">Reference proteome</keyword>
<keyword id="KW-0717">Septation</keyword>
<dbReference type="EMBL" id="M22630">
    <property type="protein sequence ID" value="AAA22457.1"/>
    <property type="molecule type" value="Genomic_DNA"/>
</dbReference>
<dbReference type="EMBL" id="AL009126">
    <property type="protein sequence ID" value="CAB13402.2"/>
    <property type="molecule type" value="Genomic_DNA"/>
</dbReference>
<dbReference type="EMBL" id="J05400">
    <property type="protein sequence ID" value="AAA83361.1"/>
    <property type="molecule type" value="Genomic_DNA"/>
</dbReference>
<dbReference type="PIR" id="I39848">
    <property type="entry name" value="I39848"/>
</dbReference>
<dbReference type="RefSeq" id="NP_389412.2">
    <property type="nucleotide sequence ID" value="NC_000964.3"/>
</dbReference>
<dbReference type="RefSeq" id="WP_003232167.1">
    <property type="nucleotide sequence ID" value="NZ_OZ025638.1"/>
</dbReference>
<dbReference type="PDB" id="2RHH">
    <property type="method" value="X-ray"/>
    <property type="resolution" value="2.00 A"/>
    <property type="chains" value="A=12-315"/>
</dbReference>
<dbReference type="PDB" id="2RHJ">
    <property type="method" value="X-ray"/>
    <property type="resolution" value="1.76 A"/>
    <property type="chains" value="A=12-315"/>
</dbReference>
<dbReference type="PDB" id="2RHL">
    <property type="method" value="X-ray"/>
    <property type="resolution" value="2.45 A"/>
    <property type="chains" value="A/B=12-315"/>
</dbReference>
<dbReference type="PDB" id="2RHO">
    <property type="method" value="X-ray"/>
    <property type="resolution" value="2.45 A"/>
    <property type="chains" value="A/B=12-315"/>
</dbReference>
<dbReference type="PDB" id="2VAM">
    <property type="method" value="X-ray"/>
    <property type="resolution" value="2.50 A"/>
    <property type="chains" value="A=1-382"/>
</dbReference>
<dbReference type="PDB" id="2VXY">
    <property type="method" value="X-ray"/>
    <property type="resolution" value="1.70 A"/>
    <property type="chains" value="A=1-382"/>
</dbReference>
<dbReference type="PDB" id="4U39">
    <property type="method" value="X-ray"/>
    <property type="resolution" value="3.19 A"/>
    <property type="chains" value="A/B/C/D/E/F/G/H/I=12-315"/>
</dbReference>
<dbReference type="PDBsum" id="2RHH"/>
<dbReference type="PDBsum" id="2RHJ"/>
<dbReference type="PDBsum" id="2RHL"/>
<dbReference type="PDBsum" id="2RHO"/>
<dbReference type="PDBsum" id="2VAM"/>
<dbReference type="PDBsum" id="2VXY"/>
<dbReference type="PDBsum" id="4U39"/>
<dbReference type="SMR" id="P17865"/>
<dbReference type="FunCoup" id="P17865">
    <property type="interactions" value="590"/>
</dbReference>
<dbReference type="IntAct" id="P17865">
    <property type="interactions" value="9"/>
</dbReference>
<dbReference type="MINT" id="P17865"/>
<dbReference type="STRING" id="224308.BSU15290"/>
<dbReference type="BindingDB" id="P17865"/>
<dbReference type="ChEMBL" id="CHEMBL5690"/>
<dbReference type="jPOST" id="P17865"/>
<dbReference type="PaxDb" id="224308-BSU15290"/>
<dbReference type="EnsemblBacteria" id="CAB13402">
    <property type="protein sequence ID" value="CAB13402"/>
    <property type="gene ID" value="BSU_15290"/>
</dbReference>
<dbReference type="GeneID" id="11241907"/>
<dbReference type="GeneID" id="935971"/>
<dbReference type="KEGG" id="bsu:BSU15290"/>
<dbReference type="PATRIC" id="fig|224308.179.peg.1667"/>
<dbReference type="eggNOG" id="COG0206">
    <property type="taxonomic scope" value="Bacteria"/>
</dbReference>
<dbReference type="InParanoid" id="P17865"/>
<dbReference type="OrthoDB" id="9813375at2"/>
<dbReference type="PhylomeDB" id="P17865"/>
<dbReference type="BioCyc" id="BSUB:BSU15290-MONOMER"/>
<dbReference type="EvolutionaryTrace" id="P17865"/>
<dbReference type="PRO" id="PR:P17865"/>
<dbReference type="Proteomes" id="UP000001570">
    <property type="component" value="Chromosome"/>
</dbReference>
<dbReference type="GO" id="GO:0032153">
    <property type="term" value="C:cell division site"/>
    <property type="evidence" value="ECO:0000318"/>
    <property type="project" value="GO_Central"/>
</dbReference>
<dbReference type="GO" id="GO:0030428">
    <property type="term" value="C:cell septum"/>
    <property type="evidence" value="ECO:0000314"/>
    <property type="project" value="CACAO"/>
</dbReference>
<dbReference type="GO" id="GO:0005737">
    <property type="term" value="C:cytoplasm"/>
    <property type="evidence" value="ECO:0000318"/>
    <property type="project" value="GO_Central"/>
</dbReference>
<dbReference type="GO" id="GO:0005525">
    <property type="term" value="F:GTP binding"/>
    <property type="evidence" value="ECO:0000318"/>
    <property type="project" value="GO_Central"/>
</dbReference>
<dbReference type="GO" id="GO:0003924">
    <property type="term" value="F:GTPase activity"/>
    <property type="evidence" value="ECO:0000314"/>
    <property type="project" value="CACAO"/>
</dbReference>
<dbReference type="GO" id="GO:0042802">
    <property type="term" value="F:identical protein binding"/>
    <property type="evidence" value="ECO:0000353"/>
    <property type="project" value="IntAct"/>
</dbReference>
<dbReference type="GO" id="GO:0051301">
    <property type="term" value="P:cell division"/>
    <property type="evidence" value="ECO:0000315"/>
    <property type="project" value="CACAO"/>
</dbReference>
<dbReference type="GO" id="GO:0000917">
    <property type="term" value="P:division septum assembly"/>
    <property type="evidence" value="ECO:0007669"/>
    <property type="project" value="UniProtKB-KW"/>
</dbReference>
<dbReference type="GO" id="GO:0043093">
    <property type="term" value="P:FtsZ-dependent cytokinesis"/>
    <property type="evidence" value="ECO:0007669"/>
    <property type="project" value="UniProtKB-UniRule"/>
</dbReference>
<dbReference type="GO" id="GO:0051258">
    <property type="term" value="P:protein polymerization"/>
    <property type="evidence" value="ECO:0007669"/>
    <property type="project" value="UniProtKB-UniRule"/>
</dbReference>
<dbReference type="CDD" id="cd02201">
    <property type="entry name" value="FtsZ_type1"/>
    <property type="match status" value="1"/>
</dbReference>
<dbReference type="DisProt" id="DP02202"/>
<dbReference type="FunFam" id="3.30.1330.20:FF:000005">
    <property type="entry name" value="Cell division protein FtsZ"/>
    <property type="match status" value="1"/>
</dbReference>
<dbReference type="FunFam" id="3.40.50.1440:FF:000023">
    <property type="entry name" value="Cell division protein FtsZ"/>
    <property type="match status" value="1"/>
</dbReference>
<dbReference type="Gene3D" id="3.30.1330.20">
    <property type="entry name" value="Tubulin/FtsZ, C-terminal domain"/>
    <property type="match status" value="1"/>
</dbReference>
<dbReference type="Gene3D" id="3.40.50.1440">
    <property type="entry name" value="Tubulin/FtsZ, GTPase domain"/>
    <property type="match status" value="1"/>
</dbReference>
<dbReference type="HAMAP" id="MF_00909">
    <property type="entry name" value="FtsZ"/>
    <property type="match status" value="1"/>
</dbReference>
<dbReference type="InterPro" id="IPR000158">
    <property type="entry name" value="Cell_div_FtsZ"/>
</dbReference>
<dbReference type="InterPro" id="IPR020805">
    <property type="entry name" value="Cell_div_FtsZ_CS"/>
</dbReference>
<dbReference type="InterPro" id="IPR045061">
    <property type="entry name" value="FtsZ/CetZ"/>
</dbReference>
<dbReference type="InterPro" id="IPR024757">
    <property type="entry name" value="FtsZ_C"/>
</dbReference>
<dbReference type="InterPro" id="IPR008280">
    <property type="entry name" value="Tub_FtsZ_C"/>
</dbReference>
<dbReference type="InterPro" id="IPR037103">
    <property type="entry name" value="Tubulin/FtsZ-like_C"/>
</dbReference>
<dbReference type="InterPro" id="IPR018316">
    <property type="entry name" value="Tubulin/FtsZ_2-layer-sand-dom"/>
</dbReference>
<dbReference type="InterPro" id="IPR036525">
    <property type="entry name" value="Tubulin/FtsZ_GTPase_sf"/>
</dbReference>
<dbReference type="InterPro" id="IPR003008">
    <property type="entry name" value="Tubulin_FtsZ_GTPase"/>
</dbReference>
<dbReference type="NCBIfam" id="TIGR00065">
    <property type="entry name" value="ftsZ"/>
    <property type="match status" value="1"/>
</dbReference>
<dbReference type="PANTHER" id="PTHR30314">
    <property type="entry name" value="CELL DIVISION PROTEIN FTSZ-RELATED"/>
    <property type="match status" value="1"/>
</dbReference>
<dbReference type="PANTHER" id="PTHR30314:SF3">
    <property type="entry name" value="MITOCHONDRIAL DIVISION PROTEIN FSZA"/>
    <property type="match status" value="1"/>
</dbReference>
<dbReference type="Pfam" id="PF12327">
    <property type="entry name" value="FtsZ_C"/>
    <property type="match status" value="1"/>
</dbReference>
<dbReference type="Pfam" id="PF00091">
    <property type="entry name" value="Tubulin"/>
    <property type="match status" value="1"/>
</dbReference>
<dbReference type="PRINTS" id="PR00423">
    <property type="entry name" value="CELLDVISFTSZ"/>
</dbReference>
<dbReference type="SMART" id="SM00864">
    <property type="entry name" value="Tubulin"/>
    <property type="match status" value="1"/>
</dbReference>
<dbReference type="SMART" id="SM00865">
    <property type="entry name" value="Tubulin_C"/>
    <property type="match status" value="1"/>
</dbReference>
<dbReference type="SUPFAM" id="SSF55307">
    <property type="entry name" value="Tubulin C-terminal domain-like"/>
    <property type="match status" value="1"/>
</dbReference>
<dbReference type="SUPFAM" id="SSF52490">
    <property type="entry name" value="Tubulin nucleotide-binding domain-like"/>
    <property type="match status" value="1"/>
</dbReference>
<dbReference type="PROSITE" id="PS01134">
    <property type="entry name" value="FTSZ_1"/>
    <property type="match status" value="1"/>
</dbReference>
<dbReference type="PROSITE" id="PS01135">
    <property type="entry name" value="FTSZ_2"/>
    <property type="match status" value="1"/>
</dbReference>
<comment type="function">
    <text evidence="1 3 4">Essential cell division protein that forms a contractile ring structure (Z ring) at the future cell division site. The regulation of the ring assembly controls the timing and the location of cell division. One of the functions of the FtsZ ring is to recruit other cell division proteins to the septum to produce a new cell wall between the dividing cells. Binds GTP and shows GTPase activity.</text>
</comment>
<comment type="activity regulation">
    <text evidence="5 8">During sporulation, is negatively regulated by MciZ, which binds to FtsZ and inhibits its polymerization and the formation of the Z ring.</text>
</comment>
<comment type="subunit">
    <text evidence="1 4 7 8">Homodimer. Polymerizes to form a dynamic ring structure in a strictly GTP-dependent manner (By similarity). Interacts directly with several other division proteins (By similarity). Interacts with FtsA (PubMed:16159787). Interacts with Phi29 DNA replication protein 1 (PubMed:23836667). Interacts with the cell division inhibitor MciZ (PubMed:23836667, PubMed:25848052).</text>
</comment>
<comment type="interaction">
    <interactant intactId="EBI-1569853">
        <id>P17865</id>
    </interactant>
    <interactant intactId="EBI-1567579">
        <id>O34894</id>
        <label>ezrA</label>
    </interactant>
    <organismsDiffer>false</organismsDiffer>
    <experiments>4</experiments>
</comment>
<comment type="interaction">
    <interactant intactId="EBI-1569853">
        <id>P17865</id>
    </interactant>
    <interactant intactId="EBI-2122615">
        <id>P28264</id>
        <label>ftsA</label>
    </interactant>
    <organismsDiffer>false</organismsDiffer>
    <experiments>7</experiments>
</comment>
<comment type="interaction">
    <interactant intactId="EBI-1569853">
        <id>P17865</id>
    </interactant>
    <interactant intactId="EBI-1569853">
        <id>P17865</id>
        <label>ftsZ</label>
    </interactant>
    <organismsDiffer>false</organismsDiffer>
    <experiments>6</experiments>
</comment>
<comment type="interaction">
    <interactant intactId="EBI-1569853">
        <id>P17865</id>
    </interactant>
    <interactant intactId="EBI-2122748">
        <id>O31728</id>
        <label>sepF</label>
    </interactant>
    <organismsDiffer>false</organismsDiffer>
    <experiments>8</experiments>
</comment>
<comment type="interaction">
    <interactant intactId="EBI-1569853">
        <id>P17865</id>
    </interactant>
    <interactant intactId="EBI-1567571">
        <id>P54166</id>
        <label>ugtP</label>
    </interactant>
    <organismsDiffer>false</organismsDiffer>
    <experiments>3</experiments>
</comment>
<comment type="interaction">
    <interactant intactId="EBI-1569853">
        <id>P17865</id>
    </interactant>
    <interactant intactId="EBI-2122911">
        <id>P94542</id>
        <label>zapA</label>
    </interactant>
    <organismsDiffer>false</organismsDiffer>
    <experiments>4</experiments>
</comment>
<comment type="subcellular location">
    <subcellularLocation>
        <location evidence="1">Cytoplasm</location>
    </subcellularLocation>
    <text evidence="1">Assembles at midcell at the inner surface of the cytoplasmic membrane.</text>
</comment>
<comment type="similarity">
    <text evidence="1">Belongs to the FtsZ family.</text>
</comment>
<comment type="online information" name="Protein Spotlight">
    <link uri="https://www.proteinspotlight.org/back_issues/171/"/>
    <text>Becoming two - Issue 171 of July 2015</text>
</comment>
<protein>
    <recommendedName>
        <fullName evidence="1">Cell division protein FtsZ</fullName>
    </recommendedName>
</protein>
<feature type="chain" id="PRO_0000114341" description="Cell division protein FtsZ">
    <location>
        <begin position="1"/>
        <end position="382"/>
    </location>
</feature>
<feature type="region of interest" description="Disordered" evidence="2">
    <location>
        <begin position="320"/>
        <end position="382"/>
    </location>
</feature>
<feature type="compositionally biased region" description="Polar residues" evidence="2">
    <location>
        <begin position="326"/>
        <end position="341"/>
    </location>
</feature>
<feature type="compositionally biased region" description="Basic and acidic residues" evidence="2">
    <location>
        <begin position="342"/>
        <end position="351"/>
    </location>
</feature>
<feature type="compositionally biased region" description="Polar residues" evidence="2">
    <location>
        <begin position="352"/>
        <end position="365"/>
    </location>
</feature>
<feature type="binding site" evidence="1 6">
    <location>
        <begin position="21"/>
        <end position="25"/>
    </location>
    <ligand>
        <name>GTP</name>
        <dbReference type="ChEBI" id="CHEBI:37565"/>
    </ligand>
</feature>
<feature type="binding site" evidence="1 6">
    <location>
        <begin position="108"/>
        <end position="110"/>
    </location>
    <ligand>
        <name>GTP</name>
        <dbReference type="ChEBI" id="CHEBI:37565"/>
    </ligand>
</feature>
<feature type="binding site" evidence="1 6">
    <location>
        <position position="139"/>
    </location>
    <ligand>
        <name>GTP</name>
        <dbReference type="ChEBI" id="CHEBI:37565"/>
    </ligand>
</feature>
<feature type="binding site" evidence="1 6">
    <location>
        <position position="143"/>
    </location>
    <ligand>
        <name>GTP</name>
        <dbReference type="ChEBI" id="CHEBI:37565"/>
    </ligand>
</feature>
<feature type="binding site" evidence="1 6">
    <location>
        <position position="187"/>
    </location>
    <ligand>
        <name>GTP</name>
        <dbReference type="ChEBI" id="CHEBI:37565"/>
    </ligand>
</feature>
<feature type="mutagenesis site" description="Disrupts interaction with MciZ." evidence="8">
    <original>D</original>
    <variation>R</variation>
    <location>
        <position position="280"/>
    </location>
</feature>
<feature type="sequence conflict" description="In Ref. 1; AAA22457." evidence="9" ref="1">
    <original>EP</original>
    <variation>DA</variation>
    <location>
        <begin position="345"/>
        <end position="346"/>
    </location>
</feature>
<feature type="strand" evidence="12">
    <location>
        <begin position="14"/>
        <end position="19"/>
    </location>
</feature>
<feature type="helix" evidence="12">
    <location>
        <begin position="20"/>
        <end position="32"/>
    </location>
</feature>
<feature type="strand" evidence="12">
    <location>
        <begin position="39"/>
        <end position="46"/>
    </location>
</feature>
<feature type="helix" evidence="12">
    <location>
        <begin position="47"/>
        <end position="51"/>
    </location>
</feature>
<feature type="strand" evidence="12">
    <location>
        <begin position="56"/>
        <end position="60"/>
    </location>
</feature>
<feature type="helix" evidence="12">
    <location>
        <begin position="63"/>
        <end position="66"/>
    </location>
</feature>
<feature type="helix" evidence="12">
    <location>
        <begin position="75"/>
        <end position="84"/>
    </location>
</feature>
<feature type="helix" evidence="12">
    <location>
        <begin position="86"/>
        <end position="93"/>
    </location>
</feature>
<feature type="strand" evidence="12">
    <location>
        <begin position="97"/>
        <end position="108"/>
    </location>
</feature>
<feature type="helix" evidence="12">
    <location>
        <begin position="109"/>
        <end position="123"/>
    </location>
</feature>
<feature type="strand" evidence="12">
    <location>
        <begin position="127"/>
        <end position="134"/>
    </location>
</feature>
<feature type="helix" evidence="12">
    <location>
        <begin position="137"/>
        <end position="139"/>
    </location>
</feature>
<feature type="helix" evidence="12">
    <location>
        <begin position="141"/>
        <end position="157"/>
    </location>
</feature>
<feature type="strand" evidence="12">
    <location>
        <begin position="159"/>
        <end position="165"/>
    </location>
</feature>
<feature type="helix" evidence="12">
    <location>
        <begin position="166"/>
        <end position="172"/>
    </location>
</feature>
<feature type="helix" evidence="12">
    <location>
        <begin position="179"/>
        <end position="198"/>
    </location>
</feature>
<feature type="turn" evidence="12">
    <location>
        <begin position="199"/>
        <end position="201"/>
    </location>
</feature>
<feature type="strand" evidence="11">
    <location>
        <begin position="205"/>
        <end position="207"/>
    </location>
</feature>
<feature type="helix" evidence="12">
    <location>
        <begin position="211"/>
        <end position="217"/>
    </location>
</feature>
<feature type="strand" evidence="12">
    <location>
        <begin position="221"/>
        <end position="233"/>
    </location>
</feature>
<feature type="helix" evidence="12">
    <location>
        <begin position="236"/>
        <end position="245"/>
    </location>
</feature>
<feature type="helix" evidence="12">
    <location>
        <begin position="254"/>
        <end position="256"/>
    </location>
</feature>
<feature type="strand" evidence="12">
    <location>
        <begin position="258"/>
        <end position="266"/>
    </location>
</feature>
<feature type="helix" evidence="12">
    <location>
        <begin position="272"/>
        <end position="285"/>
    </location>
</feature>
<feature type="strand" evidence="12">
    <location>
        <begin position="291"/>
        <end position="298"/>
    </location>
</feature>
<feature type="strand" evidence="12">
    <location>
        <begin position="303"/>
        <end position="315"/>
    </location>
</feature>
<organism>
    <name type="scientific">Bacillus subtilis (strain 168)</name>
    <dbReference type="NCBI Taxonomy" id="224308"/>
    <lineage>
        <taxon>Bacteria</taxon>
        <taxon>Bacillati</taxon>
        <taxon>Bacillota</taxon>
        <taxon>Bacilli</taxon>
        <taxon>Bacillales</taxon>
        <taxon>Bacillaceae</taxon>
        <taxon>Bacillus</taxon>
    </lineage>
</organism>
<sequence length="382" mass="40395">MLEFETNIDGLASIKVIGVGGGGNNAVNRMIENEVQGVEYIAVNTDAQALNLSKAEVKMQIGAKLTRGLGAGANPEVGKKAAEESKEQIEEALKGADMVFVTAGMGGGTGTGAAPVIAQIAKDLGALTVGVVTRPFTFEGRKRQLQAAGGISAMKEAVDTLIVIPNDRILEIVDKNTPMLEAFREADNVLRQGVQGISDLIATPGLINLDFADVKTIMSNKGSALMGIGIATGENRAAEAAKKAISSPLLEAAIDGAQGVLMNITGGTNLSLYEVQEAADIVASASDQDVNMIFGSVINENLKDEIVVTVIATGFIEQEKDVTKPQRPSLNQSIKTHNQSVPKREPKREEPQQQNTVSRHTSQPADDTLDIPTFLRNRNKRG</sequence>
<proteinExistence type="evidence at protein level"/>
<gene>
    <name evidence="1" type="primary">ftsZ</name>
    <name type="ordered locus">BSU15290</name>
</gene>
<accession>P17865</accession>